<feature type="chain" id="PRO_1000089189" description="Endoribonuclease YbeY">
    <location>
        <begin position="1"/>
        <end position="154"/>
    </location>
</feature>
<feature type="binding site" evidence="1">
    <location>
        <position position="120"/>
    </location>
    <ligand>
        <name>Zn(2+)</name>
        <dbReference type="ChEBI" id="CHEBI:29105"/>
        <note>catalytic</note>
    </ligand>
</feature>
<feature type="binding site" evidence="1">
    <location>
        <position position="124"/>
    </location>
    <ligand>
        <name>Zn(2+)</name>
        <dbReference type="ChEBI" id="CHEBI:29105"/>
        <note>catalytic</note>
    </ligand>
</feature>
<feature type="binding site" evidence="1">
    <location>
        <position position="130"/>
    </location>
    <ligand>
        <name>Zn(2+)</name>
        <dbReference type="ChEBI" id="CHEBI:29105"/>
        <note>catalytic</note>
    </ligand>
</feature>
<reference key="1">
    <citation type="journal article" date="2008" name="PLoS ONE">
        <title>Genome sequence of the saprophyte Leptospira biflexa provides insights into the evolution of Leptospira and the pathogenesis of leptospirosis.</title>
        <authorList>
            <person name="Picardeau M."/>
            <person name="Bulach D.M."/>
            <person name="Bouchier C."/>
            <person name="Zuerner R.L."/>
            <person name="Zidane N."/>
            <person name="Wilson P.J."/>
            <person name="Creno S."/>
            <person name="Kuczek E.S."/>
            <person name="Bommezzadri S."/>
            <person name="Davis J.C."/>
            <person name="McGrath A."/>
            <person name="Johnson M.J."/>
            <person name="Boursaux-Eude C."/>
            <person name="Seemann T."/>
            <person name="Rouy Z."/>
            <person name="Coppel R.L."/>
            <person name="Rood J.I."/>
            <person name="Lajus A."/>
            <person name="Davies J.K."/>
            <person name="Medigue C."/>
            <person name="Adler B."/>
        </authorList>
    </citation>
    <scope>NUCLEOTIDE SEQUENCE [LARGE SCALE GENOMIC DNA]</scope>
    <source>
        <strain>Patoc 1 / ATCC 23582 / Paris</strain>
    </source>
</reference>
<protein>
    <recommendedName>
        <fullName evidence="1">Endoribonuclease YbeY</fullName>
        <ecNumber evidence="1">3.1.-.-</ecNumber>
    </recommendedName>
</protein>
<comment type="function">
    <text evidence="1">Single strand-specific metallo-endoribonuclease involved in late-stage 70S ribosome quality control and in maturation of the 3' terminus of the 16S rRNA.</text>
</comment>
<comment type="cofactor">
    <cofactor evidence="1">
        <name>Zn(2+)</name>
        <dbReference type="ChEBI" id="CHEBI:29105"/>
    </cofactor>
    <text evidence="1">Binds 1 zinc ion.</text>
</comment>
<comment type="subcellular location">
    <subcellularLocation>
        <location evidence="1">Cytoplasm</location>
    </subcellularLocation>
</comment>
<comment type="similarity">
    <text evidence="1">Belongs to the endoribonuclease YbeY family.</text>
</comment>
<gene>
    <name evidence="1" type="primary">ybeY</name>
    <name type="ordered locus">LEPBI_I2092</name>
</gene>
<accession>B0SSV4</accession>
<keyword id="KW-0963">Cytoplasm</keyword>
<keyword id="KW-0255">Endonuclease</keyword>
<keyword id="KW-0378">Hydrolase</keyword>
<keyword id="KW-0479">Metal-binding</keyword>
<keyword id="KW-0540">Nuclease</keyword>
<keyword id="KW-1185">Reference proteome</keyword>
<keyword id="KW-0690">Ribosome biogenesis</keyword>
<keyword id="KW-0698">rRNA processing</keyword>
<keyword id="KW-0862">Zinc</keyword>
<name>YBEY_LEPBP</name>
<sequence>MNPSLSVFTHWNDESNQSEIFSDPVISNCEKILRFLAPEFLHSLELSIYLVNDSLMAEINEERRGKPATTDVLSFPLYSEHPPIPVQILGEVVISMETCKKQAMEIGHGLVDEFYRLLVHGILHNFGYDHETNEEDALLMRKMEDECLDLVFAT</sequence>
<dbReference type="EC" id="3.1.-.-" evidence="1"/>
<dbReference type="EMBL" id="CP000786">
    <property type="protein sequence ID" value="ABZ98194.1"/>
    <property type="molecule type" value="Genomic_DNA"/>
</dbReference>
<dbReference type="RefSeq" id="WP_012389064.1">
    <property type="nucleotide sequence ID" value="NC_010602.1"/>
</dbReference>
<dbReference type="SMR" id="B0SSV4"/>
<dbReference type="STRING" id="456481.LEPBI_I2092"/>
<dbReference type="KEGG" id="lbi:LEPBI_I2092"/>
<dbReference type="HOGENOM" id="CLU_106710_3_3_12"/>
<dbReference type="OrthoDB" id="9807740at2"/>
<dbReference type="BioCyc" id="LBIF456481:LEPBI_RS10335-MONOMER"/>
<dbReference type="Proteomes" id="UP000001847">
    <property type="component" value="Chromosome I"/>
</dbReference>
<dbReference type="GO" id="GO:0005737">
    <property type="term" value="C:cytoplasm"/>
    <property type="evidence" value="ECO:0007669"/>
    <property type="project" value="UniProtKB-SubCell"/>
</dbReference>
<dbReference type="GO" id="GO:0004222">
    <property type="term" value="F:metalloendopeptidase activity"/>
    <property type="evidence" value="ECO:0007669"/>
    <property type="project" value="InterPro"/>
</dbReference>
<dbReference type="GO" id="GO:0004521">
    <property type="term" value="F:RNA endonuclease activity"/>
    <property type="evidence" value="ECO:0007669"/>
    <property type="project" value="UniProtKB-UniRule"/>
</dbReference>
<dbReference type="GO" id="GO:0008270">
    <property type="term" value="F:zinc ion binding"/>
    <property type="evidence" value="ECO:0007669"/>
    <property type="project" value="UniProtKB-UniRule"/>
</dbReference>
<dbReference type="GO" id="GO:0006364">
    <property type="term" value="P:rRNA processing"/>
    <property type="evidence" value="ECO:0007669"/>
    <property type="project" value="UniProtKB-UniRule"/>
</dbReference>
<dbReference type="Gene3D" id="3.40.390.30">
    <property type="entry name" value="Metalloproteases ('zincins'), catalytic domain"/>
    <property type="match status" value="1"/>
</dbReference>
<dbReference type="HAMAP" id="MF_00009">
    <property type="entry name" value="Endoribonucl_YbeY"/>
    <property type="match status" value="1"/>
</dbReference>
<dbReference type="InterPro" id="IPR023091">
    <property type="entry name" value="MetalPrtase_cat_dom_sf_prd"/>
</dbReference>
<dbReference type="InterPro" id="IPR002036">
    <property type="entry name" value="YbeY"/>
</dbReference>
<dbReference type="NCBIfam" id="TIGR00043">
    <property type="entry name" value="rRNA maturation RNase YbeY"/>
    <property type="match status" value="1"/>
</dbReference>
<dbReference type="PANTHER" id="PTHR46986">
    <property type="entry name" value="ENDORIBONUCLEASE YBEY, CHLOROPLASTIC"/>
    <property type="match status" value="1"/>
</dbReference>
<dbReference type="PANTHER" id="PTHR46986:SF1">
    <property type="entry name" value="ENDORIBONUCLEASE YBEY, CHLOROPLASTIC"/>
    <property type="match status" value="1"/>
</dbReference>
<dbReference type="Pfam" id="PF02130">
    <property type="entry name" value="YbeY"/>
    <property type="match status" value="1"/>
</dbReference>
<dbReference type="SUPFAM" id="SSF55486">
    <property type="entry name" value="Metalloproteases ('zincins'), catalytic domain"/>
    <property type="match status" value="1"/>
</dbReference>
<organism>
    <name type="scientific">Leptospira biflexa serovar Patoc (strain Patoc 1 / ATCC 23582 / Paris)</name>
    <dbReference type="NCBI Taxonomy" id="456481"/>
    <lineage>
        <taxon>Bacteria</taxon>
        <taxon>Pseudomonadati</taxon>
        <taxon>Spirochaetota</taxon>
        <taxon>Spirochaetia</taxon>
        <taxon>Leptospirales</taxon>
        <taxon>Leptospiraceae</taxon>
        <taxon>Leptospira</taxon>
    </lineage>
</organism>
<evidence type="ECO:0000255" key="1">
    <source>
        <dbReference type="HAMAP-Rule" id="MF_00009"/>
    </source>
</evidence>
<proteinExistence type="inferred from homology"/>